<comment type="catalytic activity">
    <reaction evidence="1">
        <text>L-citrulline + L-aspartate + ATP = 2-(N(omega)-L-arginino)succinate + AMP + diphosphate + H(+)</text>
        <dbReference type="Rhea" id="RHEA:10932"/>
        <dbReference type="ChEBI" id="CHEBI:15378"/>
        <dbReference type="ChEBI" id="CHEBI:29991"/>
        <dbReference type="ChEBI" id="CHEBI:30616"/>
        <dbReference type="ChEBI" id="CHEBI:33019"/>
        <dbReference type="ChEBI" id="CHEBI:57472"/>
        <dbReference type="ChEBI" id="CHEBI:57743"/>
        <dbReference type="ChEBI" id="CHEBI:456215"/>
        <dbReference type="EC" id="6.3.4.5"/>
    </reaction>
</comment>
<comment type="pathway">
    <text evidence="1">Amino-acid biosynthesis; L-arginine biosynthesis; L-arginine from L-ornithine and carbamoyl phosphate: step 2/3.</text>
</comment>
<comment type="subunit">
    <text evidence="1">Homotetramer.</text>
</comment>
<comment type="subcellular location">
    <subcellularLocation>
        <location evidence="1">Cytoplasm</location>
    </subcellularLocation>
</comment>
<comment type="similarity">
    <text evidence="1">Belongs to the argininosuccinate synthase family. Type 1 subfamily.</text>
</comment>
<evidence type="ECO:0000255" key="1">
    <source>
        <dbReference type="HAMAP-Rule" id="MF_00005"/>
    </source>
</evidence>
<proteinExistence type="inferred from homology"/>
<reference key="1">
    <citation type="journal article" date="2005" name="Science">
        <title>Genome streamlining in a cosmopolitan oceanic bacterium.</title>
        <authorList>
            <person name="Giovannoni S.J."/>
            <person name="Tripp H.J."/>
            <person name="Givan S."/>
            <person name="Podar M."/>
            <person name="Vergin K.L."/>
            <person name="Baptista D."/>
            <person name="Bibbs L."/>
            <person name="Eads J."/>
            <person name="Richardson T.H."/>
            <person name="Noordewier M."/>
            <person name="Rappe M.S."/>
            <person name="Short J.M."/>
            <person name="Carrington J.C."/>
            <person name="Mathur E.J."/>
        </authorList>
    </citation>
    <scope>NUCLEOTIDE SEQUENCE [LARGE SCALE GENOMIC DNA]</scope>
    <source>
        <strain>HTCC1062</strain>
    </source>
</reference>
<keyword id="KW-0028">Amino-acid biosynthesis</keyword>
<keyword id="KW-0055">Arginine biosynthesis</keyword>
<keyword id="KW-0067">ATP-binding</keyword>
<keyword id="KW-0963">Cytoplasm</keyword>
<keyword id="KW-0436">Ligase</keyword>
<keyword id="KW-0547">Nucleotide-binding</keyword>
<keyword id="KW-1185">Reference proteome</keyword>
<dbReference type="EC" id="6.3.4.5" evidence="1"/>
<dbReference type="EMBL" id="CP000084">
    <property type="protein sequence ID" value="AAZ21115.1"/>
    <property type="molecule type" value="Genomic_DNA"/>
</dbReference>
<dbReference type="RefSeq" id="WP_011281607.1">
    <property type="nucleotide sequence ID" value="NC_007205.1"/>
</dbReference>
<dbReference type="SMR" id="Q4FNX4"/>
<dbReference type="STRING" id="335992.SAR11_0294"/>
<dbReference type="GeneID" id="66294790"/>
<dbReference type="KEGG" id="pub:SAR11_0294"/>
<dbReference type="eggNOG" id="COG0137">
    <property type="taxonomic scope" value="Bacteria"/>
</dbReference>
<dbReference type="HOGENOM" id="CLU_032784_4_2_5"/>
<dbReference type="OrthoDB" id="9801641at2"/>
<dbReference type="UniPathway" id="UPA00068">
    <property type="reaction ID" value="UER00113"/>
</dbReference>
<dbReference type="Proteomes" id="UP000002528">
    <property type="component" value="Chromosome"/>
</dbReference>
<dbReference type="GO" id="GO:0005737">
    <property type="term" value="C:cytoplasm"/>
    <property type="evidence" value="ECO:0007669"/>
    <property type="project" value="UniProtKB-SubCell"/>
</dbReference>
<dbReference type="GO" id="GO:0004055">
    <property type="term" value="F:argininosuccinate synthase activity"/>
    <property type="evidence" value="ECO:0007669"/>
    <property type="project" value="UniProtKB-UniRule"/>
</dbReference>
<dbReference type="GO" id="GO:0005524">
    <property type="term" value="F:ATP binding"/>
    <property type="evidence" value="ECO:0007669"/>
    <property type="project" value="UniProtKB-UniRule"/>
</dbReference>
<dbReference type="GO" id="GO:0000053">
    <property type="term" value="P:argininosuccinate metabolic process"/>
    <property type="evidence" value="ECO:0007669"/>
    <property type="project" value="TreeGrafter"/>
</dbReference>
<dbReference type="GO" id="GO:0006526">
    <property type="term" value="P:L-arginine biosynthetic process"/>
    <property type="evidence" value="ECO:0007669"/>
    <property type="project" value="UniProtKB-UniRule"/>
</dbReference>
<dbReference type="GO" id="GO:0000050">
    <property type="term" value="P:urea cycle"/>
    <property type="evidence" value="ECO:0007669"/>
    <property type="project" value="TreeGrafter"/>
</dbReference>
<dbReference type="CDD" id="cd01999">
    <property type="entry name" value="ASS"/>
    <property type="match status" value="1"/>
</dbReference>
<dbReference type="FunFam" id="3.40.50.620:FF:000019">
    <property type="entry name" value="Argininosuccinate synthase"/>
    <property type="match status" value="1"/>
</dbReference>
<dbReference type="FunFam" id="3.90.1260.10:FF:000007">
    <property type="entry name" value="Argininosuccinate synthase"/>
    <property type="match status" value="1"/>
</dbReference>
<dbReference type="Gene3D" id="3.90.1260.10">
    <property type="entry name" value="Argininosuccinate synthetase, chain A, domain 2"/>
    <property type="match status" value="1"/>
</dbReference>
<dbReference type="Gene3D" id="3.40.50.620">
    <property type="entry name" value="HUPs"/>
    <property type="match status" value="1"/>
</dbReference>
<dbReference type="HAMAP" id="MF_00005">
    <property type="entry name" value="Arg_succ_synth_type1"/>
    <property type="match status" value="1"/>
</dbReference>
<dbReference type="InterPro" id="IPR048268">
    <property type="entry name" value="Arginosuc_syn_C"/>
</dbReference>
<dbReference type="InterPro" id="IPR048267">
    <property type="entry name" value="Arginosuc_syn_N"/>
</dbReference>
<dbReference type="InterPro" id="IPR001518">
    <property type="entry name" value="Arginosuc_synth"/>
</dbReference>
<dbReference type="InterPro" id="IPR018223">
    <property type="entry name" value="Arginosuc_synth_CS"/>
</dbReference>
<dbReference type="InterPro" id="IPR023434">
    <property type="entry name" value="Arginosuc_synth_type_1_subfam"/>
</dbReference>
<dbReference type="InterPro" id="IPR024074">
    <property type="entry name" value="AS_cat/multimer_dom_body"/>
</dbReference>
<dbReference type="InterPro" id="IPR014729">
    <property type="entry name" value="Rossmann-like_a/b/a_fold"/>
</dbReference>
<dbReference type="NCBIfam" id="TIGR00032">
    <property type="entry name" value="argG"/>
    <property type="match status" value="1"/>
</dbReference>
<dbReference type="NCBIfam" id="NF001770">
    <property type="entry name" value="PRK00509.1"/>
    <property type="match status" value="1"/>
</dbReference>
<dbReference type="PANTHER" id="PTHR11587">
    <property type="entry name" value="ARGININOSUCCINATE SYNTHASE"/>
    <property type="match status" value="1"/>
</dbReference>
<dbReference type="PANTHER" id="PTHR11587:SF2">
    <property type="entry name" value="ARGININOSUCCINATE SYNTHASE"/>
    <property type="match status" value="1"/>
</dbReference>
<dbReference type="Pfam" id="PF20979">
    <property type="entry name" value="Arginosuc_syn_C"/>
    <property type="match status" value="1"/>
</dbReference>
<dbReference type="Pfam" id="PF00764">
    <property type="entry name" value="Arginosuc_synth"/>
    <property type="match status" value="1"/>
</dbReference>
<dbReference type="SUPFAM" id="SSF52402">
    <property type="entry name" value="Adenine nucleotide alpha hydrolases-like"/>
    <property type="match status" value="1"/>
</dbReference>
<dbReference type="SUPFAM" id="SSF69864">
    <property type="entry name" value="Argininosuccinate synthetase, C-terminal domain"/>
    <property type="match status" value="1"/>
</dbReference>
<dbReference type="PROSITE" id="PS00564">
    <property type="entry name" value="ARGININOSUCCIN_SYN_1"/>
    <property type="match status" value="1"/>
</dbReference>
<dbReference type="PROSITE" id="PS00565">
    <property type="entry name" value="ARGININOSUCCIN_SYN_2"/>
    <property type="match status" value="1"/>
</dbReference>
<name>ASSY_PELUB</name>
<sequence>MKSKKKIVLAYSGGLDTSIILKWLQENYDAEVICYTADVGQEIDRKKIIKNAKRLGVKNIIIEDLKDTFVKDYVFPMIRGHAIYEGVYLLGTSIARPLIAKRQIAAAKKFGAYAVSHGSTGKGNDQVRFELGYHYFGPKVKIIAPWRIWKLNSRTDLIKYAKKNNIPIPTDKKGAPPFSIDDNLYHTSTEGKVLENPKNSAPEFLFQRTVSPEKAPNKASFVTIGFKNGDPITVNGKKLSPGNLLEKLNNVAGKNGIGRVDLVENRFIGIKSRGVYETPGGTLLMSAHRAIESITLDKETMHKKDEIMPKYAELIYNGYWYSKARFKLQKIVDLKKNKVNGSVKLKLYKGNITIMSRQTKSNAYSMKKVSFEENKTFNKSNVERFINFHKQKLRS</sequence>
<protein>
    <recommendedName>
        <fullName evidence="1">Argininosuccinate synthase</fullName>
        <ecNumber evidence="1">6.3.4.5</ecNumber>
    </recommendedName>
    <alternativeName>
        <fullName evidence="1">Citrulline--aspartate ligase</fullName>
    </alternativeName>
</protein>
<feature type="chain" id="PRO_0000263947" description="Argininosuccinate synthase">
    <location>
        <begin position="1"/>
        <end position="395"/>
    </location>
</feature>
<feature type="binding site" evidence="1">
    <location>
        <begin position="10"/>
        <end position="18"/>
    </location>
    <ligand>
        <name>ATP</name>
        <dbReference type="ChEBI" id="CHEBI:30616"/>
    </ligand>
</feature>
<feature type="binding site" evidence="1">
    <location>
        <position position="37"/>
    </location>
    <ligand>
        <name>ATP</name>
        <dbReference type="ChEBI" id="CHEBI:30616"/>
    </ligand>
</feature>
<feature type="binding site" evidence="1">
    <location>
        <position position="88"/>
    </location>
    <ligand>
        <name>L-citrulline</name>
        <dbReference type="ChEBI" id="CHEBI:57743"/>
    </ligand>
</feature>
<feature type="binding site" evidence="1">
    <location>
        <position position="93"/>
    </location>
    <ligand>
        <name>L-citrulline</name>
        <dbReference type="ChEBI" id="CHEBI:57743"/>
    </ligand>
</feature>
<feature type="binding site" evidence="1">
    <location>
        <position position="118"/>
    </location>
    <ligand>
        <name>ATP</name>
        <dbReference type="ChEBI" id="CHEBI:30616"/>
    </ligand>
</feature>
<feature type="binding site" evidence="1">
    <location>
        <position position="120"/>
    </location>
    <ligand>
        <name>L-aspartate</name>
        <dbReference type="ChEBI" id="CHEBI:29991"/>
    </ligand>
</feature>
<feature type="binding site" evidence="1">
    <location>
        <position position="124"/>
    </location>
    <ligand>
        <name>L-aspartate</name>
        <dbReference type="ChEBI" id="CHEBI:29991"/>
    </ligand>
</feature>
<feature type="binding site" evidence="1">
    <location>
        <position position="124"/>
    </location>
    <ligand>
        <name>L-citrulline</name>
        <dbReference type="ChEBI" id="CHEBI:57743"/>
    </ligand>
</feature>
<feature type="binding site" evidence="1">
    <location>
        <position position="125"/>
    </location>
    <ligand>
        <name>L-aspartate</name>
        <dbReference type="ChEBI" id="CHEBI:29991"/>
    </ligand>
</feature>
<feature type="binding site" evidence="1">
    <location>
        <position position="128"/>
    </location>
    <ligand>
        <name>L-citrulline</name>
        <dbReference type="ChEBI" id="CHEBI:57743"/>
    </ligand>
</feature>
<feature type="binding site" evidence="1">
    <location>
        <position position="179"/>
    </location>
    <ligand>
        <name>L-citrulline</name>
        <dbReference type="ChEBI" id="CHEBI:57743"/>
    </ligand>
</feature>
<feature type="binding site" evidence="1">
    <location>
        <position position="188"/>
    </location>
    <ligand>
        <name>L-citrulline</name>
        <dbReference type="ChEBI" id="CHEBI:57743"/>
    </ligand>
</feature>
<feature type="binding site" evidence="1">
    <location>
        <position position="264"/>
    </location>
    <ligand>
        <name>L-citrulline</name>
        <dbReference type="ChEBI" id="CHEBI:57743"/>
    </ligand>
</feature>
<feature type="binding site" evidence="1">
    <location>
        <position position="276"/>
    </location>
    <ligand>
        <name>L-citrulline</name>
        <dbReference type="ChEBI" id="CHEBI:57743"/>
    </ligand>
</feature>
<gene>
    <name evidence="1" type="primary">argG</name>
    <name type="ordered locus">SAR11_0294</name>
</gene>
<accession>Q4FNX4</accession>
<organism>
    <name type="scientific">Pelagibacter ubique (strain HTCC1062)</name>
    <dbReference type="NCBI Taxonomy" id="335992"/>
    <lineage>
        <taxon>Bacteria</taxon>
        <taxon>Pseudomonadati</taxon>
        <taxon>Pseudomonadota</taxon>
        <taxon>Alphaproteobacteria</taxon>
        <taxon>Candidatus Pelagibacterales</taxon>
        <taxon>Candidatus Pelagibacteraceae</taxon>
        <taxon>Candidatus Pelagibacter</taxon>
    </lineage>
</organism>